<keyword id="KW-0106">Calcium</keyword>
<keyword id="KW-0186">Copper</keyword>
<keyword id="KW-0479">Metal-binding</keyword>
<keyword id="KW-0560">Oxidoreductase</keyword>
<keyword id="KW-0574">Periplasm</keyword>
<keyword id="KW-0732">Signal</keyword>
<comment type="function">
    <text evidence="1">Nitrous-oxide reductase is part of a bacterial respiratory system which is activated under anaerobic conditions in the presence of nitrate or nitrous oxide.</text>
</comment>
<comment type="catalytic activity">
    <reaction>
        <text>N2 + 2 Fe(III)-[cytochrome c] + H2O = nitrous oxide + 2 Fe(II)-[cytochrome c] + 2 H(+)</text>
        <dbReference type="Rhea" id="RHEA:43108"/>
        <dbReference type="Rhea" id="RHEA-COMP:10350"/>
        <dbReference type="Rhea" id="RHEA-COMP:14399"/>
        <dbReference type="ChEBI" id="CHEBI:15377"/>
        <dbReference type="ChEBI" id="CHEBI:15378"/>
        <dbReference type="ChEBI" id="CHEBI:17045"/>
        <dbReference type="ChEBI" id="CHEBI:17997"/>
        <dbReference type="ChEBI" id="CHEBI:29033"/>
        <dbReference type="ChEBI" id="CHEBI:29034"/>
        <dbReference type="EC" id="1.7.2.4"/>
    </reaction>
</comment>
<comment type="cofactor">
    <cofactor evidence="1">
        <name>Ca(2+)</name>
        <dbReference type="ChEBI" id="CHEBI:29108"/>
    </cofactor>
    <text evidence="1">Binds 2 calcium ions per subunit.</text>
</comment>
<comment type="cofactor">
    <cofactor evidence="1">
        <name>Cu cation</name>
        <dbReference type="ChEBI" id="CHEBI:23378"/>
    </cofactor>
    <text evidence="1">Binds 6 Cu cations per subunit. Each subunit contains 2 copper centers; Cu(A) (binuclear) and Cu(Z) (tetranuclear). Cu(Z) is thought to be the site of nitrous oxide reduction.</text>
</comment>
<comment type="pathway">
    <text>Nitrogen metabolism; nitrate reduction (denitrification); dinitrogen from nitrate: step 4/4.</text>
</comment>
<comment type="subunit">
    <text evidence="1">Homodimer.</text>
</comment>
<comment type="subcellular location">
    <subcellularLocation>
        <location evidence="1">Periplasm</location>
    </subcellularLocation>
</comment>
<comment type="PTM">
    <text>Predicted to be exported by the Tat system. The position of the signal peptide cleavage has not been experimentally proven.</text>
</comment>
<comment type="similarity">
    <text evidence="3">Belongs to the NosZ family.</text>
</comment>
<comment type="similarity">
    <text evidence="3">In the C-terminal section; belongs to the cytochrome c oxidase subunit 2 family.</text>
</comment>
<comment type="sequence caution" evidence="3">
    <conflict type="erroneous termination">
        <sequence resource="EMBL-CDS" id="AAL54215"/>
    </conflict>
    <text>Truncated C-terminus.</text>
</comment>
<comment type="sequence caution" evidence="3">
    <conflict type="erroneous termination">
        <sequence resource="EMBL-CDS" id="AAL54216"/>
    </conflict>
    <text>Truncated C-terminus.</text>
</comment>
<dbReference type="EC" id="1.7.2.4"/>
<dbReference type="EMBL" id="AE008918">
    <property type="protein sequence ID" value="AAL54215.1"/>
    <property type="status" value="ALT_SEQ"/>
    <property type="molecule type" value="Genomic_DNA"/>
</dbReference>
<dbReference type="EMBL" id="AE008918">
    <property type="protein sequence ID" value="AAL54216.1"/>
    <property type="status" value="ALT_SEQ"/>
    <property type="molecule type" value="Genomic_DNA"/>
</dbReference>
<dbReference type="PIR" id="AD3631">
    <property type="entry name" value="AD3631"/>
</dbReference>
<dbReference type="PIR" id="AE3631">
    <property type="entry name" value="AE3631"/>
</dbReference>
<dbReference type="SMR" id="Q8YBC6"/>
<dbReference type="KEGG" id="bme:BMEII0973"/>
<dbReference type="KEGG" id="bme:BMEII0974"/>
<dbReference type="eggNOG" id="COG4263">
    <property type="taxonomic scope" value="Bacteria"/>
</dbReference>
<dbReference type="UniPathway" id="UPA00652">
    <property type="reaction ID" value="UER00709"/>
</dbReference>
<dbReference type="Proteomes" id="UP000000419">
    <property type="component" value="Chromosome II"/>
</dbReference>
<dbReference type="GO" id="GO:0016020">
    <property type="term" value="C:membrane"/>
    <property type="evidence" value="ECO:0007669"/>
    <property type="project" value="InterPro"/>
</dbReference>
<dbReference type="GO" id="GO:0042597">
    <property type="term" value="C:periplasmic space"/>
    <property type="evidence" value="ECO:0007669"/>
    <property type="project" value="UniProtKB-SubCell"/>
</dbReference>
<dbReference type="GO" id="GO:0005509">
    <property type="term" value="F:calcium ion binding"/>
    <property type="evidence" value="ECO:0007669"/>
    <property type="project" value="UniProtKB-UniRule"/>
</dbReference>
<dbReference type="GO" id="GO:0005507">
    <property type="term" value="F:copper ion binding"/>
    <property type="evidence" value="ECO:0007669"/>
    <property type="project" value="UniProtKB-UniRule"/>
</dbReference>
<dbReference type="GO" id="GO:0004129">
    <property type="term" value="F:cytochrome-c oxidase activity"/>
    <property type="evidence" value="ECO:0007669"/>
    <property type="project" value="InterPro"/>
</dbReference>
<dbReference type="GO" id="GO:0050304">
    <property type="term" value="F:nitrous-oxide reductase activity"/>
    <property type="evidence" value="ECO:0007669"/>
    <property type="project" value="UniProtKB-UniRule"/>
</dbReference>
<dbReference type="GO" id="GO:0019333">
    <property type="term" value="P:denitrification pathway"/>
    <property type="evidence" value="ECO:0007669"/>
    <property type="project" value="UniProtKB-UniPathway"/>
</dbReference>
<dbReference type="CDD" id="cd04223">
    <property type="entry name" value="N2OR_C"/>
    <property type="match status" value="1"/>
</dbReference>
<dbReference type="Gene3D" id="2.60.40.420">
    <property type="entry name" value="Cupredoxins - blue copper proteins"/>
    <property type="match status" value="1"/>
</dbReference>
<dbReference type="Gene3D" id="2.130.10.10">
    <property type="entry name" value="YVTN repeat-like/Quinoprotein amine dehydrogenase"/>
    <property type="match status" value="1"/>
</dbReference>
<dbReference type="HAMAP" id="MF_00716">
    <property type="entry name" value="NosZ"/>
    <property type="match status" value="1"/>
</dbReference>
<dbReference type="InterPro" id="IPR002429">
    <property type="entry name" value="CcO_II-like_C"/>
</dbReference>
<dbReference type="InterPro" id="IPR008972">
    <property type="entry name" value="Cupredoxin"/>
</dbReference>
<dbReference type="InterPro" id="IPR011045">
    <property type="entry name" value="N2O_reductase_N"/>
</dbReference>
<dbReference type="InterPro" id="IPR034205">
    <property type="entry name" value="N2OR_C"/>
</dbReference>
<dbReference type="InterPro" id="IPR023644">
    <property type="entry name" value="NO_Rdtase"/>
</dbReference>
<dbReference type="InterPro" id="IPR041114">
    <property type="entry name" value="Nos_propeller"/>
</dbReference>
<dbReference type="InterPro" id="IPR041142">
    <property type="entry name" value="NOS_propeller_2"/>
</dbReference>
<dbReference type="InterPro" id="IPR051403">
    <property type="entry name" value="NosZ/Cyto_c_oxidase_sub2"/>
</dbReference>
<dbReference type="InterPro" id="IPR006311">
    <property type="entry name" value="TAT_signal"/>
</dbReference>
<dbReference type="InterPro" id="IPR015943">
    <property type="entry name" value="WD40/YVTN_repeat-like_dom_sf"/>
</dbReference>
<dbReference type="NCBIfam" id="TIGR04244">
    <property type="entry name" value="nitrous_NosZ_RR"/>
    <property type="match status" value="1"/>
</dbReference>
<dbReference type="PANTHER" id="PTHR42838">
    <property type="entry name" value="CYTOCHROME C OXIDASE SUBUNIT II"/>
    <property type="match status" value="1"/>
</dbReference>
<dbReference type="PANTHER" id="PTHR42838:SF2">
    <property type="entry name" value="NITROUS-OXIDE REDUCTASE"/>
    <property type="match status" value="1"/>
</dbReference>
<dbReference type="Pfam" id="PF00116">
    <property type="entry name" value="COX2"/>
    <property type="match status" value="1"/>
</dbReference>
<dbReference type="Pfam" id="PF18764">
    <property type="entry name" value="nos_propeller"/>
    <property type="match status" value="1"/>
</dbReference>
<dbReference type="Pfam" id="PF18793">
    <property type="entry name" value="nos_propeller_2"/>
    <property type="match status" value="1"/>
</dbReference>
<dbReference type="SUPFAM" id="SSF49503">
    <property type="entry name" value="Cupredoxins"/>
    <property type="match status" value="1"/>
</dbReference>
<dbReference type="SUPFAM" id="SSF50974">
    <property type="entry name" value="Nitrous oxide reductase, N-terminal domain"/>
    <property type="match status" value="1"/>
</dbReference>
<dbReference type="PROSITE" id="PS50857">
    <property type="entry name" value="COX2_CUA"/>
    <property type="match status" value="1"/>
</dbReference>
<dbReference type="PROSITE" id="PS51318">
    <property type="entry name" value="TAT"/>
    <property type="match status" value="1"/>
</dbReference>
<protein>
    <recommendedName>
        <fullName>Nitrous-oxide reductase</fullName>
        <ecNumber>1.7.2.4</ecNumber>
    </recommendedName>
    <alternativeName>
        <fullName>N(2)OR</fullName>
    </alternativeName>
    <alternativeName>
        <fullName>N2O reductase</fullName>
    </alternativeName>
</protein>
<proteinExistence type="inferred from homology"/>
<sequence length="639" mass="71087">MTEETRKSQLSRRQLLGTSAFVAAAGASGLGGALLAGSSETALAAGAAKGGMSPEVKPGELDEYYVFFSSGQCGEVRIVGLPSMRELMRIPVFNRDSATGWGLTNESRKVLTEGLLPQDREFLKDRGDIFLNGDLHHPHPSFTDGTYDGRYLYANDKANTRVCRIRLDVMKCDKIIQLPNQHTVHGLRVQKYPKTGYVFCNGEDRVPIPNDGSHLNDVKQYHAIFTAVDGETMKVAWQVMVDGNLDNVDCDYQGKYAFSTCYNSEEGTTLAEMMSSEQDWIVVFNLKRIEEAVANGDFKEMNGVPVIDGRHGSKYTRYIPVPNSPHGINTALDGIHVVANGKLSPTVTVFDVRKFDDLFDDKIKPRDAVVAEPELGLGPLHTAYDDKGNAYTTLFIDSQICKWNIEDAKRAFKGEKVDPIRQKLDVHYQPGHNHSSMGQTKEVDGKWLISLNKFSKDRYLNVGPLKPENDQLIDISGDKMVIVHDGPSFAEPHDATIVHRSKINPVSFWSREDPFFADAVAQAKADGLDLMEANEVVRDGNKVRVYMTSSAPAFGLTEFTVQQDDEVTVYVTNIDEIEDLTHGFAIVNYGVNMEVAPQATASVTFKASKPGVWWYYCSWFCHAMHMEMQGRMLVEPKKA</sequence>
<gene>
    <name type="primary">nosZ</name>
    <name type="ordered locus">BMEII0973/BMEII0974</name>
</gene>
<feature type="signal peptide" description="Tat-type signal" evidence="2">
    <location>
        <begin position="1"/>
        <end position="44"/>
    </location>
</feature>
<feature type="chain" id="PRO_0000019825" description="Nitrous-oxide reductase">
    <location>
        <begin position="45"/>
        <end position="639"/>
    </location>
</feature>
<feature type="region of interest" description="COX2-like">
    <location>
        <begin position="541"/>
        <end position="639"/>
    </location>
</feature>
<feature type="binding site" evidence="1">
    <location>
        <position position="136"/>
    </location>
    <ligand>
        <name>Cu cation</name>
        <dbReference type="ChEBI" id="CHEBI:23378"/>
        <label>Z2</label>
    </ligand>
</feature>
<feature type="binding site" evidence="1">
    <location>
        <position position="137"/>
    </location>
    <ligand>
        <name>Cu cation</name>
        <dbReference type="ChEBI" id="CHEBI:23378"/>
        <label>Z3</label>
    </ligand>
</feature>
<feature type="binding site" evidence="1">
    <location>
        <position position="185"/>
    </location>
    <ligand>
        <name>Cu cation</name>
        <dbReference type="ChEBI" id="CHEBI:23378"/>
        <label>Z2</label>
    </ligand>
</feature>
<feature type="binding site" evidence="1">
    <location>
        <position position="262"/>
    </location>
    <ligand>
        <name>Ca(2+)</name>
        <dbReference type="ChEBI" id="CHEBI:29108"/>
        <label>2</label>
    </ligand>
</feature>
<feature type="binding site" evidence="1">
    <location>
        <position position="265"/>
    </location>
    <ligand>
        <name>Ca(2+)</name>
        <dbReference type="ChEBI" id="CHEBI:29108"/>
        <label>2</label>
    </ligand>
</feature>
<feature type="binding site" evidence="1">
    <location>
        <position position="273"/>
    </location>
    <ligand>
        <name>Ca(2+)</name>
        <dbReference type="ChEBI" id="CHEBI:29108"/>
        <label>2</label>
    </ligand>
</feature>
<feature type="binding site" evidence="1">
    <location>
        <position position="279"/>
    </location>
    <ligand>
        <name>Ca(2+)</name>
        <dbReference type="ChEBI" id="CHEBI:29108"/>
        <label>2</label>
    </ligand>
</feature>
<feature type="binding site" evidence="1">
    <location>
        <position position="324"/>
    </location>
    <ligand>
        <name>Ca(2+)</name>
        <dbReference type="ChEBI" id="CHEBI:29108"/>
        <label>2</label>
    </ligand>
</feature>
<feature type="binding site" evidence="1">
    <location>
        <position position="326"/>
    </location>
    <ligand>
        <name>Cu cation</name>
        <dbReference type="ChEBI" id="CHEBI:23378"/>
        <label>Z1</label>
    </ligand>
</feature>
<feature type="binding site" evidence="1">
    <location>
        <position position="381"/>
    </location>
    <ligand>
        <name>Cu cation</name>
        <dbReference type="ChEBI" id="CHEBI:23378"/>
        <label>Z1</label>
    </ligand>
</feature>
<feature type="binding site" evidence="1">
    <location>
        <position position="432"/>
    </location>
    <ligand>
        <name>Cu cation</name>
        <dbReference type="ChEBI" id="CHEBI:23378"/>
        <label>Z3</label>
    </ligand>
</feature>
<feature type="binding site" evidence="1">
    <location>
        <position position="453"/>
    </location>
    <ligand>
        <name>Ca(2+)</name>
        <dbReference type="ChEBI" id="CHEBI:29108"/>
        <label>1</label>
    </ligand>
</feature>
<feature type="binding site" evidence="1">
    <location>
        <position position="468"/>
    </location>
    <ligand>
        <name>Ca(2+)</name>
        <dbReference type="ChEBI" id="CHEBI:29108"/>
        <label>1</label>
    </ligand>
</feature>
<feature type="binding site" evidence="1">
    <location>
        <position position="493"/>
    </location>
    <ligand>
        <name>Cu cation</name>
        <dbReference type="ChEBI" id="CHEBI:23378"/>
        <label>Z4</label>
    </ligand>
</feature>
<feature type="binding site" evidence="1">
    <location>
        <position position="582"/>
    </location>
    <ligand>
        <name>Cu cation</name>
        <dbReference type="ChEBI" id="CHEBI:23378"/>
        <label>A1</label>
    </ligand>
</feature>
<feature type="binding site" evidence="1">
    <location>
        <position position="617"/>
    </location>
    <ligand>
        <name>Cu cation</name>
        <dbReference type="ChEBI" id="CHEBI:23378"/>
        <label>A1</label>
    </ligand>
</feature>
<feature type="binding site" evidence="1">
    <location>
        <position position="617"/>
    </location>
    <ligand>
        <name>Cu cation</name>
        <dbReference type="ChEBI" id="CHEBI:23378"/>
        <label>A2</label>
    </ligand>
</feature>
<feature type="binding site" evidence="1">
    <location>
        <position position="619"/>
    </location>
    <ligand>
        <name>Cu cation</name>
        <dbReference type="ChEBI" id="CHEBI:23378"/>
        <label>A2</label>
    </ligand>
</feature>
<feature type="binding site" evidence="1">
    <location>
        <position position="621"/>
    </location>
    <ligand>
        <name>Cu cation</name>
        <dbReference type="ChEBI" id="CHEBI:23378"/>
        <label>A1</label>
    </ligand>
</feature>
<feature type="binding site" evidence="1">
    <location>
        <position position="621"/>
    </location>
    <ligand>
        <name>Cu cation</name>
        <dbReference type="ChEBI" id="CHEBI:23378"/>
        <label>A2</label>
    </ligand>
</feature>
<feature type="binding site" evidence="1">
    <location>
        <position position="625"/>
    </location>
    <ligand>
        <name>Cu cation</name>
        <dbReference type="ChEBI" id="CHEBI:23378"/>
        <label>A2</label>
    </ligand>
</feature>
<feature type="binding site" evidence="1">
    <location>
        <position position="628"/>
    </location>
    <ligand>
        <name>Cu cation</name>
        <dbReference type="ChEBI" id="CHEBI:23378"/>
        <label>A1</label>
    </ligand>
</feature>
<organism>
    <name type="scientific">Brucella melitensis biotype 1 (strain ATCC 23456 / CCUG 17765 / NCTC 10094 / 16M)</name>
    <dbReference type="NCBI Taxonomy" id="224914"/>
    <lineage>
        <taxon>Bacteria</taxon>
        <taxon>Pseudomonadati</taxon>
        <taxon>Pseudomonadota</taxon>
        <taxon>Alphaproteobacteria</taxon>
        <taxon>Hyphomicrobiales</taxon>
        <taxon>Brucellaceae</taxon>
        <taxon>Brucella/Ochrobactrum group</taxon>
        <taxon>Brucella</taxon>
    </lineage>
</organism>
<accession>Q8YBC6</accession>
<accession>Q8YBC7</accession>
<evidence type="ECO:0000250" key="1"/>
<evidence type="ECO:0000255" key="2"/>
<evidence type="ECO:0000305" key="3"/>
<reference key="1">
    <citation type="journal article" date="2002" name="Proc. Natl. Acad. Sci. U.S.A.">
        <title>The genome sequence of the facultative intracellular pathogen Brucella melitensis.</title>
        <authorList>
            <person name="DelVecchio V.G."/>
            <person name="Kapatral V."/>
            <person name="Redkar R.J."/>
            <person name="Patra G."/>
            <person name="Mujer C."/>
            <person name="Los T."/>
            <person name="Ivanova N."/>
            <person name="Anderson I."/>
            <person name="Bhattacharyya A."/>
            <person name="Lykidis A."/>
            <person name="Reznik G."/>
            <person name="Jablonski L."/>
            <person name="Larsen N."/>
            <person name="D'Souza M."/>
            <person name="Bernal A."/>
            <person name="Mazur M."/>
            <person name="Goltsman E."/>
            <person name="Selkov E."/>
            <person name="Elzer P.H."/>
            <person name="Hagius S."/>
            <person name="O'Callaghan D."/>
            <person name="Letesson J.-J."/>
            <person name="Haselkorn R."/>
            <person name="Kyrpides N.C."/>
            <person name="Overbeek R."/>
        </authorList>
    </citation>
    <scope>NUCLEOTIDE SEQUENCE [LARGE SCALE GENOMIC DNA]</scope>
    <source>
        <strain>ATCC 23456 / CCUG 17765 / NCTC 10094 / 16M</strain>
    </source>
</reference>
<name>NOSZ_BRUME</name>